<protein>
    <recommendedName>
        <fullName>Bromodomain-containing protein 4</fullName>
    </recommendedName>
    <alternativeName>
        <fullName>Mitotic chromosome-associated protein</fullName>
        <shortName>MCAP</shortName>
    </alternativeName>
</protein>
<comment type="function">
    <text evidence="2 6 9 13 14">Chromatin reader protein that recognizes and binds acetylated histones and plays a key role in transmission of epigenetic memory across cell divisions and transcription regulation (PubMed:10938129, PubMed:29379197). Remains associated with acetylated chromatin throughout the entire cell cycle and provides epigenetic memory for postmitotic G1 gene transcription by preserving acetylated chromatin status and maintaining high-order chromatin structure (PubMed:10938129). During interphase, plays a key role in regulating the transcription of signal-inducible genes by associating with the P-TEFb complex and recruiting it to promoters. Also recruits P-TEFb complex to distal enhancers, so called anti-pause enhancers in collaboration with JMJD6. BRD4 and JMJD6 are required to form the transcriptionally active P-TEFb complex by displacing negative regulators such as HEXIM1 and 7SKsnRNA complex from P-TEFb, thereby transforming it into an active form that can then phosphorylate the C-terminal domain (CTD) of RNA polymerase II (By similarity). Regulates differentiation of naive CD4(+) T-cells into T-helper Th17 by promoting recruitment of P-TEFb to promoters (PubMed:28262505). Promotes phosphorylation of 'Ser-2' of the C-terminal domain (CTD) of RNA polymerase II (PubMed:16109376). According to a report, directly acts as an atypical protein kinase and mediates phosphorylation of 'Ser-2' of the C-terminal domain (CTD) of RNA polymerase II; these data however need additional evidences in vivo. In addition to acetylated histones, also recognizes and binds acetylated RELA, leading to further recruitment of the P-TEFb complex and subsequent activation of NF-kappa-B. Also acts as a regulator of p53/TP53-mediated transcription: following phosphorylation by CK2, recruited to p53/TP53 specific target promoters (By similarity).</text>
</comment>
<comment type="subunit">
    <text evidence="2 9 14">Binds acetylated histone H4. Interacts with p53/TP53; the interaction is direct (By similarity). Interacts (via CTD region) with CDK9 and CCNT1, acting as an associated component of P-TEFb complex (PubMed:16109376). Interacts with RELA (when acetylated at 'Lys-310'). Interacts (via NET domain) with NSD3, CHD4, BICRA and ATAD5. The interaction with BICRA bridges BRD4 to the GBAF complex. Interacts (via NET domain) with JMJD6 (via JmjC and N-terminal domains); the interaction is stronger in presence of ssRNA and recruits JMJD6 on distal enhancers. Interacts with NSD3 (By similarity). Interacts with NIPBL (PubMed:29379197).</text>
</comment>
<comment type="interaction">
    <interactant intactId="EBI-6260864">
        <id>Q9ESU6</id>
    </interactant>
    <interactant intactId="EBI-73886">
        <id>Q04206</id>
        <label>RELA</label>
    </interactant>
    <organismsDiffer>true</organismsDiffer>
    <experiments>6</experiments>
</comment>
<comment type="subcellular location">
    <subcellularLocation>
        <location evidence="6 8 10 12">Nucleus</location>
    </subcellularLocation>
    <subcellularLocation>
        <location evidence="6 8 10 12">Chromosome</location>
    </subcellularLocation>
    <text evidence="8 10 12">Associates with acetylated chromatin (PubMed:12840145). Released from chromatin upon deacetylation of histones that can be triggered by different signals such as activation of the JNK pathway or nocodazole treatment (PubMed:22567088). Preferentially localizes to mitotic chromosomes, while it does not localizes to meiotic chromosomes (PubMed:17267518).</text>
</comment>
<comment type="alternative products">
    <event type="alternative splicing"/>
    <isoform>
        <id>Q9ESU6-1</id>
        <name>1</name>
        <name>Long</name>
        <sequence type="displayed"/>
    </isoform>
    <isoform>
        <id>Q9ESU6-2</id>
        <name>2</name>
        <name>Short</name>
        <sequence type="described" ref="VSP_010904 VSP_010905"/>
    </isoform>
</comment>
<comment type="domain">
    <text evidence="2">The NET domain mediates interaction with a number of chromatin proteins involved in transcription regulation (NSD3, JMJD6, CHD4, GLTSCR1 and ATAD5).</text>
</comment>
<comment type="domain">
    <text evidence="2">The C-terminal (CTD) region mediates interaction and recruitment of CDK9 and CCNT1 subunits of the P-TEFb complex. It is also required for maintenance of higher-order chromatin structure.</text>
</comment>
<comment type="domain">
    <text evidence="2 11">The 2 bromo domains mediate specific binding to acetylated histones via Asn-140 and Asn-434, respectively (PubMed:19828451). The exact combination of modified histone tails required to recruit BRD4 to target genes is still unclear. The first bromo domain has high affinity for acetylated histone H4 tail, whereas the second bromo domain recognizes multiply acetylated marks in histone H3. A number of specific inhibitors bind competitively to acetyl-lysine-binding residues Asn-140 and Asn-434, promoting removal from acetylated histones. Many of these inhibitors are benzodiazepine derivatives.</text>
</comment>
<comment type="PTM">
    <text evidence="2">Phosphorylation by CK2 disrupt the intramolecular binding between the bromo domain 2 and the NPS region and promotes binding between the NPS and the BID regions, leading to activate the protein and promote binding to acetylated histones. In absence of phosphorylation, BRD4 does not localize to p53/TP53 target gene promoters, phosphorylation promoting recruitment to p53/TP53 target promoters.</text>
</comment>
<comment type="disruption phenotype">
    <text evidence="7">Embryonic lethal. Embryos ndie shortly after implantation and are compromised in their ability to maintain an inner cell mass.</text>
</comment>
<comment type="miscellaneous">
    <text evidence="17 18">Some specific inhibitors of Brd4 that prevent binding to acetylated histones by binding Asn-140 and Asn-434 are promising therapeutic molecules for the treatment of leukemias. JQ1, a thieno-triazolo-1,4-diazepine derivative, and I-BET, a benzodiazepine derivative, have been tested on tumors with success. Treatment with GSK1210151A (I-BET151, a I-BET derivative) has strong effets on mixed lineage leukemia and promotes myeloid differentiation and leukemia stem-cell depletion (PubMed:21814200, PubMed:21964340).</text>
</comment>
<comment type="similarity">
    <text evidence="16">Belongs to the BET family.</text>
</comment>
<evidence type="ECO:0000250" key="1"/>
<evidence type="ECO:0000250" key="2">
    <source>
        <dbReference type="UniProtKB" id="O60885"/>
    </source>
</evidence>
<evidence type="ECO:0000255" key="3">
    <source>
        <dbReference type="PROSITE-ProRule" id="PRU00035"/>
    </source>
</evidence>
<evidence type="ECO:0000255" key="4">
    <source>
        <dbReference type="PROSITE-ProRule" id="PRU00857"/>
    </source>
</evidence>
<evidence type="ECO:0000256" key="5">
    <source>
        <dbReference type="SAM" id="MobiDB-lite"/>
    </source>
</evidence>
<evidence type="ECO:0000269" key="6">
    <source>
    </source>
</evidence>
<evidence type="ECO:0000269" key="7">
    <source>
    </source>
</evidence>
<evidence type="ECO:0000269" key="8">
    <source>
    </source>
</evidence>
<evidence type="ECO:0000269" key="9">
    <source>
    </source>
</evidence>
<evidence type="ECO:0000269" key="10">
    <source>
    </source>
</evidence>
<evidence type="ECO:0000269" key="11">
    <source>
    </source>
</evidence>
<evidence type="ECO:0000269" key="12">
    <source>
    </source>
</evidence>
<evidence type="ECO:0000269" key="13">
    <source>
    </source>
</evidence>
<evidence type="ECO:0000269" key="14">
    <source>
    </source>
</evidence>
<evidence type="ECO:0000303" key="15">
    <source>
    </source>
</evidence>
<evidence type="ECO:0000305" key="16"/>
<evidence type="ECO:0000305" key="17">
    <source>
    </source>
</evidence>
<evidence type="ECO:0000305" key="18">
    <source>
    </source>
</evidence>
<evidence type="ECO:0007829" key="19">
    <source>
        <dbReference type="PDB" id="2JNS"/>
    </source>
</evidence>
<evidence type="ECO:0007829" key="20">
    <source>
        <dbReference type="PDB" id="3JVJ"/>
    </source>
</evidence>
<evidence type="ECO:0007829" key="21">
    <source>
        <dbReference type="PDB" id="3JVL"/>
    </source>
</evidence>
<proteinExistence type="evidence at protein level"/>
<organism>
    <name type="scientific">Mus musculus</name>
    <name type="common">Mouse</name>
    <dbReference type="NCBI Taxonomy" id="10090"/>
    <lineage>
        <taxon>Eukaryota</taxon>
        <taxon>Metazoa</taxon>
        <taxon>Chordata</taxon>
        <taxon>Craniata</taxon>
        <taxon>Vertebrata</taxon>
        <taxon>Euteleostomi</taxon>
        <taxon>Mammalia</taxon>
        <taxon>Eutheria</taxon>
        <taxon>Euarchontoglires</taxon>
        <taxon>Glires</taxon>
        <taxon>Rodentia</taxon>
        <taxon>Myomorpha</taxon>
        <taxon>Muroidea</taxon>
        <taxon>Muridae</taxon>
        <taxon>Murinae</taxon>
        <taxon>Mus</taxon>
        <taxon>Mus</taxon>
    </lineage>
</organism>
<dbReference type="EMBL" id="AF273217">
    <property type="protein sequence ID" value="AAG02191.1"/>
    <property type="molecule type" value="mRNA"/>
</dbReference>
<dbReference type="EMBL" id="AF461395">
    <property type="protein sequence ID" value="AAL67833.1"/>
    <property type="molecule type" value="mRNA"/>
</dbReference>
<dbReference type="EMBL" id="AF461396">
    <property type="protein sequence ID" value="AAL67834.1"/>
    <property type="molecule type" value="mRNA"/>
</dbReference>
<dbReference type="EMBL" id="CT033751">
    <property type="status" value="NOT_ANNOTATED_CDS"/>
    <property type="molecule type" value="Genomic_DNA"/>
</dbReference>
<dbReference type="EMBL" id="CT033755">
    <property type="status" value="NOT_ANNOTATED_CDS"/>
    <property type="molecule type" value="Genomic_DNA"/>
</dbReference>
<dbReference type="EMBL" id="CH466640">
    <property type="protein sequence ID" value="EDL40326.1"/>
    <property type="molecule type" value="Genomic_DNA"/>
</dbReference>
<dbReference type="EMBL" id="CH466640">
    <property type="protein sequence ID" value="EDL40329.1"/>
    <property type="molecule type" value="Genomic_DNA"/>
</dbReference>
<dbReference type="CCDS" id="CCDS37554.1">
    <molecule id="Q9ESU6-2"/>
</dbReference>
<dbReference type="CCDS" id="CCDS50057.1">
    <molecule id="Q9ESU6-1"/>
</dbReference>
<dbReference type="RefSeq" id="NP_065254.3">
    <molecule id="Q9ESU6-1"/>
    <property type="nucleotide sequence ID" value="NM_020508.4"/>
</dbReference>
<dbReference type="RefSeq" id="NP_932762.2">
    <molecule id="Q9ESU6-2"/>
    <property type="nucleotide sequence ID" value="NM_198094.2"/>
</dbReference>
<dbReference type="RefSeq" id="XP_006524751.1">
    <molecule id="Q9ESU6-1"/>
    <property type="nucleotide sequence ID" value="XM_006524688.3"/>
</dbReference>
<dbReference type="RefSeq" id="XP_006524752.1">
    <molecule id="Q9ESU6-1"/>
    <property type="nucleotide sequence ID" value="XM_006524689.4"/>
</dbReference>
<dbReference type="RefSeq" id="XP_030105784.1">
    <molecule id="Q9ESU6-1"/>
    <property type="nucleotide sequence ID" value="XM_030249924.2"/>
</dbReference>
<dbReference type="RefSeq" id="XP_030105785.1">
    <molecule id="Q9ESU6-1"/>
    <property type="nucleotide sequence ID" value="XM_030249925.2"/>
</dbReference>
<dbReference type="RefSeq" id="XP_030105786.1">
    <molecule id="Q9ESU6-1"/>
    <property type="nucleotide sequence ID" value="XM_030249926.2"/>
</dbReference>
<dbReference type="RefSeq" id="XP_030105787.1">
    <molecule id="Q9ESU6-1"/>
    <property type="nucleotide sequence ID" value="XM_030249927.2"/>
</dbReference>
<dbReference type="RefSeq" id="XP_036016589.1">
    <molecule id="Q9ESU6-1"/>
    <property type="nucleotide sequence ID" value="XM_036160696.1"/>
</dbReference>
<dbReference type="RefSeq" id="XP_036016590.1">
    <molecule id="Q9ESU6-1"/>
    <property type="nucleotide sequence ID" value="XM_036160697.1"/>
</dbReference>
<dbReference type="RefSeq" id="XP_036016591.1">
    <molecule id="Q9ESU6-1"/>
    <property type="nucleotide sequence ID" value="XM_036160698.1"/>
</dbReference>
<dbReference type="RefSeq" id="XP_036016599.1">
    <molecule id="Q9ESU6-2"/>
    <property type="nucleotide sequence ID" value="XM_036160706.1"/>
</dbReference>
<dbReference type="PDB" id="2DWW">
    <property type="method" value="X-ray"/>
    <property type="resolution" value="1.80 A"/>
    <property type="chains" value="A=347-460"/>
</dbReference>
<dbReference type="PDB" id="2JNS">
    <property type="method" value="NMR"/>
    <property type="chains" value="A=601-683"/>
</dbReference>
<dbReference type="PDB" id="3JVJ">
    <property type="method" value="X-ray"/>
    <property type="resolution" value="1.55 A"/>
    <property type="chains" value="A=42-168"/>
</dbReference>
<dbReference type="PDB" id="3JVK">
    <property type="method" value="X-ray"/>
    <property type="resolution" value="1.80 A"/>
    <property type="chains" value="A=42-168"/>
</dbReference>
<dbReference type="PDB" id="3JVL">
    <property type="method" value="X-ray"/>
    <property type="resolution" value="1.20 A"/>
    <property type="chains" value="A=349-464"/>
</dbReference>
<dbReference type="PDB" id="3JVM">
    <property type="method" value="X-ray"/>
    <property type="resolution" value="1.20 A"/>
    <property type="chains" value="A=349-464"/>
</dbReference>
<dbReference type="PDB" id="3MUK">
    <property type="method" value="X-ray"/>
    <property type="resolution" value="1.75 A"/>
    <property type="chains" value="A=42-168"/>
</dbReference>
<dbReference type="PDB" id="3MUL">
    <property type="method" value="X-ray"/>
    <property type="resolution" value="1.65 A"/>
    <property type="chains" value="A=42-168"/>
</dbReference>
<dbReference type="PDBsum" id="2DWW"/>
<dbReference type="PDBsum" id="2JNS"/>
<dbReference type="PDBsum" id="3JVJ"/>
<dbReference type="PDBsum" id="3JVK"/>
<dbReference type="PDBsum" id="3JVL"/>
<dbReference type="PDBsum" id="3JVM"/>
<dbReference type="PDBsum" id="3MUK"/>
<dbReference type="PDBsum" id="3MUL"/>
<dbReference type="BMRB" id="Q9ESU6"/>
<dbReference type="SMR" id="Q9ESU6"/>
<dbReference type="BioGRID" id="208231">
    <property type="interactions" value="7"/>
</dbReference>
<dbReference type="CORUM" id="Q9ESU6"/>
<dbReference type="DIP" id="DIP-42181N"/>
<dbReference type="FunCoup" id="Q9ESU6">
    <property type="interactions" value="2893"/>
</dbReference>
<dbReference type="IntAct" id="Q9ESU6">
    <property type="interactions" value="6"/>
</dbReference>
<dbReference type="MINT" id="Q9ESU6"/>
<dbReference type="STRING" id="10090.ENSMUSP00000003726"/>
<dbReference type="BindingDB" id="Q9ESU6"/>
<dbReference type="ChEMBL" id="CHEMBL3085619"/>
<dbReference type="iPTMnet" id="Q9ESU6"/>
<dbReference type="PhosphoSitePlus" id="Q9ESU6"/>
<dbReference type="jPOST" id="Q9ESU6"/>
<dbReference type="PaxDb" id="10090-ENSMUSP00000113070"/>
<dbReference type="ProteomicsDB" id="265232">
    <molecule id="Q9ESU6-1"/>
</dbReference>
<dbReference type="ProteomicsDB" id="265233">
    <molecule id="Q9ESU6-2"/>
</dbReference>
<dbReference type="Pumba" id="Q9ESU6"/>
<dbReference type="Antibodypedia" id="13956">
    <property type="antibodies" value="486 antibodies from 39 providers"/>
</dbReference>
<dbReference type="DNASU" id="57261"/>
<dbReference type="Ensembl" id="ENSMUST00000120276.9">
    <molecule id="Q9ESU6-2"/>
    <property type="protein sequence ID" value="ENSMUSP00000112474.3"/>
    <property type="gene ID" value="ENSMUSG00000024002.19"/>
</dbReference>
<dbReference type="Ensembl" id="ENSMUST00000121285.8">
    <molecule id="Q9ESU6-1"/>
    <property type="protein sequence ID" value="ENSMUSP00000113070.2"/>
    <property type="gene ID" value="ENSMUSG00000024002.19"/>
</dbReference>
<dbReference type="GeneID" id="57261"/>
<dbReference type="KEGG" id="mmu:57261"/>
<dbReference type="UCSC" id="uc008bwa.3">
    <molecule id="Q9ESU6-1"/>
    <property type="organism name" value="mouse"/>
</dbReference>
<dbReference type="AGR" id="MGI:1888520"/>
<dbReference type="CTD" id="23476"/>
<dbReference type="MGI" id="MGI:1888520">
    <property type="gene designation" value="Brd4"/>
</dbReference>
<dbReference type="VEuPathDB" id="HostDB:ENSMUSG00000024002"/>
<dbReference type="eggNOG" id="KOG1474">
    <property type="taxonomic scope" value="Eukaryota"/>
</dbReference>
<dbReference type="GeneTree" id="ENSGT00940000154549"/>
<dbReference type="HOGENOM" id="CLU_001499_0_3_1"/>
<dbReference type="InParanoid" id="Q9ESU6"/>
<dbReference type="OrthoDB" id="21449at2759"/>
<dbReference type="TreeFam" id="TF317345"/>
<dbReference type="BRENDA" id="2.7.11.23">
    <property type="organism ID" value="3474"/>
</dbReference>
<dbReference type="BioGRID-ORCS" id="57261">
    <property type="hits" value="20 hits in 84 CRISPR screens"/>
</dbReference>
<dbReference type="ChiTaRS" id="Brd4">
    <property type="organism name" value="mouse"/>
</dbReference>
<dbReference type="EvolutionaryTrace" id="Q9ESU6"/>
<dbReference type="PRO" id="PR:Q9ESU6"/>
<dbReference type="Proteomes" id="UP000000589">
    <property type="component" value="Chromosome 17"/>
</dbReference>
<dbReference type="RNAct" id="Q9ESU6">
    <property type="molecule type" value="protein"/>
</dbReference>
<dbReference type="Bgee" id="ENSMUSG00000024002">
    <property type="expression patterns" value="Expressed in rostral migratory stream and 276 other cell types or tissues"/>
</dbReference>
<dbReference type="ExpressionAtlas" id="Q9ESU6">
    <property type="expression patterns" value="baseline and differential"/>
</dbReference>
<dbReference type="GO" id="GO:0000785">
    <property type="term" value="C:chromatin"/>
    <property type="evidence" value="ECO:0000314"/>
    <property type="project" value="MGI"/>
</dbReference>
<dbReference type="GO" id="GO:0000794">
    <property type="term" value="C:condensed nuclear chromosome"/>
    <property type="evidence" value="ECO:0000314"/>
    <property type="project" value="MGI"/>
</dbReference>
<dbReference type="GO" id="GO:0008024">
    <property type="term" value="C:cyclin/CDK positive transcription elongation factor complex"/>
    <property type="evidence" value="ECO:0000314"/>
    <property type="project" value="MGI"/>
</dbReference>
<dbReference type="GO" id="GO:0005634">
    <property type="term" value="C:nucleus"/>
    <property type="evidence" value="ECO:0000314"/>
    <property type="project" value="MGI"/>
</dbReference>
<dbReference type="GO" id="GO:0003682">
    <property type="term" value="F:chromatin binding"/>
    <property type="evidence" value="ECO:0000314"/>
    <property type="project" value="MGI"/>
</dbReference>
<dbReference type="GO" id="GO:0003677">
    <property type="term" value="F:DNA binding"/>
    <property type="evidence" value="ECO:0000314"/>
    <property type="project" value="MGI"/>
</dbReference>
<dbReference type="GO" id="GO:0034211">
    <property type="term" value="F:GTP-dependent protein kinase activity"/>
    <property type="evidence" value="ECO:0000314"/>
    <property type="project" value="MGI"/>
</dbReference>
<dbReference type="GO" id="GO:0070577">
    <property type="term" value="F:lysine-acetylated histone binding"/>
    <property type="evidence" value="ECO:0000314"/>
    <property type="project" value="UniProtKB"/>
</dbReference>
<dbReference type="GO" id="GO:0002039">
    <property type="term" value="F:p53 binding"/>
    <property type="evidence" value="ECO:0000250"/>
    <property type="project" value="UniProtKB"/>
</dbReference>
<dbReference type="GO" id="GO:0099122">
    <property type="term" value="F:RNA polymerase II C-terminal domain binding"/>
    <property type="evidence" value="ECO:0000353"/>
    <property type="project" value="MGI"/>
</dbReference>
<dbReference type="GO" id="GO:0008353">
    <property type="term" value="F:RNA polymerase II CTD heptapeptide repeat kinase activity"/>
    <property type="evidence" value="ECO:0000314"/>
    <property type="project" value="MGI"/>
</dbReference>
<dbReference type="GO" id="GO:0003712">
    <property type="term" value="F:transcription coregulator activity"/>
    <property type="evidence" value="ECO:0000250"/>
    <property type="project" value="UniProtKB"/>
</dbReference>
<dbReference type="GO" id="GO:0006325">
    <property type="term" value="P:chromatin organization"/>
    <property type="evidence" value="ECO:0007669"/>
    <property type="project" value="UniProtKB-KW"/>
</dbReference>
<dbReference type="GO" id="GO:0007059">
    <property type="term" value="P:chromosome segregation"/>
    <property type="evidence" value="ECO:0000315"/>
    <property type="project" value="MGI"/>
</dbReference>
<dbReference type="GO" id="GO:0001833">
    <property type="term" value="P:inner cell mass cell proliferation"/>
    <property type="evidence" value="ECO:0000315"/>
    <property type="project" value="MGI"/>
</dbReference>
<dbReference type="GO" id="GO:0043123">
    <property type="term" value="P:positive regulation of canonical NF-kappaB signal transduction"/>
    <property type="evidence" value="ECO:0000250"/>
    <property type="project" value="UniProtKB"/>
</dbReference>
<dbReference type="GO" id="GO:0045893">
    <property type="term" value="P:positive regulation of DNA-templated transcription"/>
    <property type="evidence" value="ECO:0000250"/>
    <property type="project" value="UniProtKB"/>
</dbReference>
<dbReference type="GO" id="GO:0010971">
    <property type="term" value="P:positive regulation of G2/M transition of mitotic cell cycle"/>
    <property type="evidence" value="ECO:0000266"/>
    <property type="project" value="MGI"/>
</dbReference>
<dbReference type="GO" id="GO:2000330">
    <property type="term" value="P:positive regulation of T-helper 17 cell lineage commitment"/>
    <property type="evidence" value="ECO:0000315"/>
    <property type="project" value="UniProtKB"/>
</dbReference>
<dbReference type="GO" id="GO:0045944">
    <property type="term" value="P:positive regulation of transcription by RNA polymerase II"/>
    <property type="evidence" value="ECO:0000250"/>
    <property type="project" value="UniProtKB"/>
</dbReference>
<dbReference type="GO" id="GO:0032968">
    <property type="term" value="P:positive regulation of transcription elongation by RNA polymerase II"/>
    <property type="evidence" value="ECO:0000250"/>
    <property type="project" value="UniProtKB"/>
</dbReference>
<dbReference type="GO" id="GO:0050727">
    <property type="term" value="P:regulation of inflammatory response"/>
    <property type="evidence" value="ECO:0000250"/>
    <property type="project" value="UniProtKB"/>
</dbReference>
<dbReference type="GO" id="GO:0006357">
    <property type="term" value="P:regulation of transcription by RNA polymerase II"/>
    <property type="evidence" value="ECO:0000266"/>
    <property type="project" value="MGI"/>
</dbReference>
<dbReference type="CDD" id="cd05497">
    <property type="entry name" value="Bromo_Brdt_I_like"/>
    <property type="match status" value="1"/>
</dbReference>
<dbReference type="CDD" id="cd05498">
    <property type="entry name" value="Bromo_Brdt_II_like"/>
    <property type="match status" value="1"/>
</dbReference>
<dbReference type="FunFam" id="1.20.920.10:FF:000003">
    <property type="entry name" value="Bromodomain-containing protein 2"/>
    <property type="match status" value="1"/>
</dbReference>
<dbReference type="FunFam" id="1.20.1270.220:FF:000001">
    <property type="entry name" value="bromodomain-containing protein 2 isoform X1"/>
    <property type="match status" value="1"/>
</dbReference>
<dbReference type="FunFam" id="1.20.920.10:FF:000002">
    <property type="entry name" value="Bromodomain-containing protein 4"/>
    <property type="match status" value="1"/>
</dbReference>
<dbReference type="Gene3D" id="1.20.1270.220">
    <property type="match status" value="1"/>
</dbReference>
<dbReference type="Gene3D" id="1.20.920.10">
    <property type="entry name" value="Bromodomain-like"/>
    <property type="match status" value="2"/>
</dbReference>
<dbReference type="IDEAL" id="IID50100"/>
<dbReference type="InterPro" id="IPR031354">
    <property type="entry name" value="BRD4_CDT"/>
</dbReference>
<dbReference type="InterPro" id="IPR043508">
    <property type="entry name" value="Bromo_Brdt_I"/>
</dbReference>
<dbReference type="InterPro" id="IPR043509">
    <property type="entry name" value="Bromo_Brdt_II"/>
</dbReference>
<dbReference type="InterPro" id="IPR050935">
    <property type="entry name" value="Bromo_chromatin_reader"/>
</dbReference>
<dbReference type="InterPro" id="IPR001487">
    <property type="entry name" value="Bromodomain"/>
</dbReference>
<dbReference type="InterPro" id="IPR036427">
    <property type="entry name" value="Bromodomain-like_sf"/>
</dbReference>
<dbReference type="InterPro" id="IPR018359">
    <property type="entry name" value="Bromodomain_CS"/>
</dbReference>
<dbReference type="InterPro" id="IPR027353">
    <property type="entry name" value="NET_dom"/>
</dbReference>
<dbReference type="InterPro" id="IPR038336">
    <property type="entry name" value="NET_sf"/>
</dbReference>
<dbReference type="PANTHER" id="PTHR22880:SF143">
    <property type="entry name" value="BROMODOMAIN-CONTAINING PROTEIN 4"/>
    <property type="match status" value="1"/>
</dbReference>
<dbReference type="PANTHER" id="PTHR22880">
    <property type="entry name" value="FALZ-RELATED BROMODOMAIN-CONTAINING PROTEINS"/>
    <property type="match status" value="1"/>
</dbReference>
<dbReference type="Pfam" id="PF17035">
    <property type="entry name" value="BET"/>
    <property type="match status" value="1"/>
</dbReference>
<dbReference type="Pfam" id="PF17105">
    <property type="entry name" value="BRD4_CDT"/>
    <property type="match status" value="1"/>
</dbReference>
<dbReference type="Pfam" id="PF00439">
    <property type="entry name" value="Bromodomain"/>
    <property type="match status" value="2"/>
</dbReference>
<dbReference type="PRINTS" id="PR00503">
    <property type="entry name" value="BROMODOMAIN"/>
</dbReference>
<dbReference type="PRINTS" id="PR01217">
    <property type="entry name" value="PRICHEXTENSN"/>
</dbReference>
<dbReference type="SMART" id="SM00297">
    <property type="entry name" value="BROMO"/>
    <property type="match status" value="2"/>
</dbReference>
<dbReference type="SUPFAM" id="SSF47370">
    <property type="entry name" value="Bromodomain"/>
    <property type="match status" value="2"/>
</dbReference>
<dbReference type="PROSITE" id="PS00633">
    <property type="entry name" value="BROMODOMAIN_1"/>
    <property type="match status" value="1"/>
</dbReference>
<dbReference type="PROSITE" id="PS50014">
    <property type="entry name" value="BROMODOMAIN_2"/>
    <property type="match status" value="2"/>
</dbReference>
<dbReference type="PROSITE" id="PS51525">
    <property type="entry name" value="NET"/>
    <property type="match status" value="1"/>
</dbReference>
<feature type="chain" id="PRO_0000211184" description="Bromodomain-containing protein 4">
    <location>
        <begin position="1"/>
        <end position="1400"/>
    </location>
</feature>
<feature type="domain" description="Bromo 1" evidence="3">
    <location>
        <begin position="58"/>
        <end position="164"/>
    </location>
</feature>
<feature type="domain" description="Bromo 2" evidence="3">
    <location>
        <begin position="349"/>
        <end position="458"/>
    </location>
</feature>
<feature type="domain" description="NET" evidence="4">
    <location>
        <begin position="601"/>
        <end position="683"/>
    </location>
</feature>
<feature type="region of interest" description="Disordered" evidence="5">
    <location>
        <begin position="1"/>
        <end position="58"/>
    </location>
</feature>
<feature type="region of interest" description="Disordered" evidence="5">
    <location>
        <begin position="176"/>
        <end position="353"/>
    </location>
</feature>
<feature type="region of interest" description="Disordered" evidence="5">
    <location>
        <begin position="461"/>
        <end position="616"/>
    </location>
</feature>
<feature type="region of interest" description="NPS region" evidence="1">
    <location>
        <begin position="485"/>
        <end position="504"/>
    </location>
</feature>
<feature type="region of interest" description="BID region" evidence="1">
    <location>
        <begin position="525"/>
        <end position="580"/>
    </location>
</feature>
<feature type="region of interest" description="Disordered" evidence="5">
    <location>
        <begin position="675"/>
        <end position="1125"/>
    </location>
</feature>
<feature type="region of interest" description="C-terminal (CTD) region" evidence="1">
    <location>
        <begin position="1050"/>
        <end position="1400"/>
    </location>
</feature>
<feature type="region of interest" description="Disordered" evidence="5">
    <location>
        <begin position="1155"/>
        <end position="1377"/>
    </location>
</feature>
<feature type="compositionally biased region" description="Low complexity" evidence="5">
    <location>
        <begin position="23"/>
        <end position="43"/>
    </location>
</feature>
<feature type="compositionally biased region" description="Low complexity" evidence="5">
    <location>
        <begin position="197"/>
        <end position="212"/>
    </location>
</feature>
<feature type="compositionally biased region" description="Pro residues" evidence="5">
    <location>
        <begin position="244"/>
        <end position="267"/>
    </location>
</feature>
<feature type="compositionally biased region" description="Basic and acidic residues" evidence="5">
    <location>
        <begin position="321"/>
        <end position="337"/>
    </location>
</feature>
<feature type="compositionally biased region" description="Low complexity" evidence="5">
    <location>
        <begin position="479"/>
        <end position="498"/>
    </location>
</feature>
<feature type="compositionally biased region" description="Basic residues" evidence="5">
    <location>
        <begin position="536"/>
        <end position="554"/>
    </location>
</feature>
<feature type="compositionally biased region" description="Basic and acidic residues" evidence="5">
    <location>
        <begin position="555"/>
        <end position="571"/>
    </location>
</feature>
<feature type="compositionally biased region" description="Basic and acidic residues" evidence="5">
    <location>
        <begin position="606"/>
        <end position="616"/>
    </location>
</feature>
<feature type="compositionally biased region" description="Low complexity" evidence="5">
    <location>
        <begin position="700"/>
        <end position="713"/>
    </location>
</feature>
<feature type="compositionally biased region" description="Basic residues" evidence="5">
    <location>
        <begin position="725"/>
        <end position="745"/>
    </location>
</feature>
<feature type="compositionally biased region" description="Pro residues" evidence="5">
    <location>
        <begin position="748"/>
        <end position="787"/>
    </location>
</feature>
<feature type="compositionally biased region" description="Pro residues" evidence="5">
    <location>
        <begin position="835"/>
        <end position="848"/>
    </location>
</feature>
<feature type="compositionally biased region" description="Pro residues" evidence="5">
    <location>
        <begin position="883"/>
        <end position="892"/>
    </location>
</feature>
<feature type="compositionally biased region" description="Pro residues" evidence="5">
    <location>
        <begin position="900"/>
        <end position="909"/>
    </location>
</feature>
<feature type="compositionally biased region" description="Low complexity" evidence="5">
    <location>
        <begin position="928"/>
        <end position="938"/>
    </location>
</feature>
<feature type="compositionally biased region" description="Pro residues" evidence="5">
    <location>
        <begin position="955"/>
        <end position="966"/>
    </location>
</feature>
<feature type="compositionally biased region" description="Pro residues" evidence="5">
    <location>
        <begin position="975"/>
        <end position="1000"/>
    </location>
</feature>
<feature type="compositionally biased region" description="Pro residues" evidence="5">
    <location>
        <begin position="1013"/>
        <end position="1037"/>
    </location>
</feature>
<feature type="compositionally biased region" description="Polar residues" evidence="5">
    <location>
        <begin position="1075"/>
        <end position="1084"/>
    </location>
</feature>
<feature type="compositionally biased region" description="Low complexity" evidence="5">
    <location>
        <begin position="1085"/>
        <end position="1095"/>
    </location>
</feature>
<feature type="compositionally biased region" description="Basic and acidic residues" evidence="5">
    <location>
        <begin position="1211"/>
        <end position="1232"/>
    </location>
</feature>
<feature type="compositionally biased region" description="Low complexity" evidence="5">
    <location>
        <begin position="1247"/>
        <end position="1258"/>
    </location>
</feature>
<feature type="compositionally biased region" description="Basic and acidic residues" evidence="5">
    <location>
        <begin position="1259"/>
        <end position="1320"/>
    </location>
</feature>
<feature type="compositionally biased region" description="Low complexity" evidence="5">
    <location>
        <begin position="1321"/>
        <end position="1357"/>
    </location>
</feature>
<feature type="compositionally biased region" description="Basic and acidic residues" evidence="5">
    <location>
        <begin position="1361"/>
        <end position="1377"/>
    </location>
</feature>
<feature type="site" description="Acetylated histone binding" evidence="11">
    <location>
        <position position="140"/>
    </location>
</feature>
<feature type="site" description="Acetylated histone binding" evidence="2">
    <location>
        <position position="434"/>
    </location>
</feature>
<feature type="modified residue" description="Phosphoserine" evidence="2">
    <location>
        <position position="471"/>
    </location>
</feature>
<feature type="modified residue" description="Phosphoserine; by CK2" evidence="2">
    <location>
        <position position="485"/>
    </location>
</feature>
<feature type="modified residue" description="Phosphoserine; by CK2" evidence="2">
    <location>
        <position position="489"/>
    </location>
</feature>
<feature type="modified residue" description="Phosphoserine; by CK2" evidence="2">
    <location>
        <position position="493"/>
    </location>
</feature>
<feature type="modified residue" description="Phosphoserine" evidence="2">
    <location>
        <position position="495"/>
    </location>
</feature>
<feature type="modified residue" description="Phosphoserine; by CK2" evidence="2">
    <location>
        <position position="499"/>
    </location>
</feature>
<feature type="modified residue" description="Phosphoserine; by CK2" evidence="2">
    <location>
        <position position="500"/>
    </location>
</feature>
<feature type="modified residue" description="Phosphoserine; by CK2" evidence="2">
    <location>
        <position position="504"/>
    </location>
</feature>
<feature type="modified residue" description="Phosphoserine" evidence="2">
    <location>
        <position position="602"/>
    </location>
</feature>
<feature type="modified residue" description="N6-acetyllysine; alternate" evidence="2">
    <location>
        <position position="1147"/>
    </location>
</feature>
<feature type="modified residue" description="Phosphoserine" evidence="2">
    <location>
        <position position="1153"/>
    </location>
</feature>
<feature type="modified residue" description="Phosphoserine" evidence="2">
    <location>
        <position position="1162"/>
    </location>
</feature>
<feature type="modified residue" description="Phosphoserine" evidence="2">
    <location>
        <position position="1237"/>
    </location>
</feature>
<feature type="modified residue" description="Phosphoserine" evidence="2">
    <location>
        <position position="1240"/>
    </location>
</feature>
<feature type="cross-link" description="Glycyl lysine isopeptide (Lys-Gly) (interchain with G-Cter in SUMO2)" evidence="2">
    <location>
        <position position="99"/>
    </location>
</feature>
<feature type="cross-link" description="Glycyl lysine isopeptide (Lys-Gly) (interchain with G-Cter in SUMO2)" evidence="2">
    <location>
        <position position="586"/>
    </location>
</feature>
<feature type="cross-link" description="Glycyl lysine isopeptide (Lys-Gly) (interchain with G-Cter in SUMO2)" evidence="2">
    <location>
        <position position="646"/>
    </location>
</feature>
<feature type="cross-link" description="Glycyl lysine isopeptide (Lys-Gly) (interchain with G-Cter in SUMO2)" evidence="2">
    <location>
        <position position="695"/>
    </location>
</feature>
<feature type="cross-link" description="Glycyl lysine isopeptide (Lys-Gly) (interchain with G-Cter in SUMO2)" evidence="2">
    <location>
        <position position="1053"/>
    </location>
</feature>
<feature type="cross-link" description="Glycyl lysine isopeptide (Lys-Gly) (interchain with G-Cter in SUMO1); alternate" evidence="2">
    <location>
        <position position="1147"/>
    </location>
</feature>
<feature type="cross-link" description="Glycyl lysine isopeptide (Lys-Gly) (interchain with G-Cter in SUMO2); alternate" evidence="2">
    <location>
        <position position="1147"/>
    </location>
</feature>
<feature type="cross-link" description="Glycyl lysine isopeptide (Lys-Gly) (interchain with G-Cter in SUMO2)" evidence="2">
    <location>
        <position position="1233"/>
    </location>
</feature>
<feature type="splice variant" id="VSP_010904" description="In isoform 2." evidence="15">
    <original>EMA</original>
    <variation>GPA</variation>
    <location>
        <begin position="721"/>
        <end position="723"/>
    </location>
</feature>
<feature type="splice variant" id="VSP_010905" description="In isoform 2." evidence="15">
    <location>
        <begin position="724"/>
        <end position="1400"/>
    </location>
</feature>
<feature type="mutagenesis site" description="No effect on acetylated histone binding." evidence="8">
    <original>Y</original>
    <variation>A</variation>
    <location>
        <position position="139"/>
    </location>
</feature>
<feature type="mutagenesis site" description="No effect on acetylated histone binding." evidence="8">
    <original>I</original>
    <variation>A</variation>
    <location>
        <position position="146"/>
    </location>
</feature>
<feature type="mutagenesis site" description="Reduced acetylated histone binding. Reduced binding to promoters and enhancers of BRD4 target genes." evidence="14">
    <original>Y</original>
    <variation>C</variation>
    <location>
        <position position="431"/>
    </location>
</feature>
<feature type="mutagenesis site" description="No effect on acetylated histone binding." evidence="8">
    <original>Y</original>
    <variation>A</variation>
    <location>
        <position position="433"/>
    </location>
</feature>
<feature type="mutagenesis site" description="No effect on acetylated histone binding." evidence="8">
    <original>V</original>
    <variation>A</variation>
    <location>
        <position position="440"/>
    </location>
</feature>
<feature type="sequence conflict" description="In Ref. 2; AAL67834." evidence="16" ref="2">
    <original>A</original>
    <variation>T</variation>
    <location>
        <position position="188"/>
    </location>
</feature>
<feature type="sequence conflict" description="In Ref. 2; AAL67833." evidence="16" ref="2">
    <original>G</original>
    <variation>S</variation>
    <location>
        <position position="823"/>
    </location>
</feature>
<feature type="sequence conflict" description="In Ref. 1; AAG02191." evidence="16" ref="1">
    <original>A</original>
    <variation>V</variation>
    <location>
        <position position="908"/>
    </location>
</feature>
<feature type="helix" evidence="20">
    <location>
        <begin position="61"/>
        <end position="68"/>
    </location>
</feature>
<feature type="helix" evidence="20">
    <location>
        <begin position="70"/>
        <end position="74"/>
    </location>
</feature>
<feature type="helix" evidence="20">
    <location>
        <begin position="81"/>
        <end position="83"/>
    </location>
</feature>
<feature type="helix" evidence="20">
    <location>
        <begin position="89"/>
        <end position="92"/>
    </location>
</feature>
<feature type="helix" evidence="20">
    <location>
        <begin position="97"/>
        <end position="100"/>
    </location>
</feature>
<feature type="helix" evidence="20">
    <location>
        <begin position="107"/>
        <end position="116"/>
    </location>
</feature>
<feature type="helix" evidence="20">
    <location>
        <begin position="122"/>
        <end position="139"/>
    </location>
</feature>
<feature type="helix" evidence="20">
    <location>
        <begin position="145"/>
        <end position="160"/>
    </location>
</feature>
<feature type="helix" evidence="21">
    <location>
        <begin position="353"/>
        <end position="365"/>
    </location>
</feature>
<feature type="helix" evidence="21">
    <location>
        <begin position="368"/>
        <end position="370"/>
    </location>
</feature>
<feature type="helix" evidence="21">
    <location>
        <begin position="371"/>
        <end position="374"/>
    </location>
</feature>
<feature type="helix" evidence="21">
    <location>
        <begin position="375"/>
        <end position="377"/>
    </location>
</feature>
<feature type="helix" evidence="21">
    <location>
        <begin position="383"/>
        <end position="386"/>
    </location>
</feature>
<feature type="helix" evidence="21">
    <location>
        <begin position="391"/>
        <end position="394"/>
    </location>
</feature>
<feature type="helix" evidence="21">
    <location>
        <begin position="401"/>
        <end position="409"/>
    </location>
</feature>
<feature type="helix" evidence="21">
    <location>
        <begin position="416"/>
        <end position="433"/>
    </location>
</feature>
<feature type="helix" evidence="21">
    <location>
        <begin position="439"/>
        <end position="455"/>
    </location>
</feature>
<feature type="turn" evidence="19">
    <location>
        <begin position="602"/>
        <end position="605"/>
    </location>
</feature>
<feature type="helix" evidence="19">
    <location>
        <begin position="613"/>
        <end position="623"/>
    </location>
</feature>
<feature type="helix" evidence="19">
    <location>
        <begin position="628"/>
        <end position="631"/>
    </location>
</feature>
<feature type="helix" evidence="19">
    <location>
        <begin position="634"/>
        <end position="639"/>
    </location>
</feature>
<feature type="helix" evidence="19">
    <location>
        <begin position="643"/>
        <end position="645"/>
    </location>
</feature>
<feature type="turn" evidence="19">
    <location>
        <begin position="657"/>
        <end position="659"/>
    </location>
</feature>
<feature type="helix" evidence="19">
    <location>
        <begin position="662"/>
        <end position="673"/>
    </location>
</feature>
<sequence>MSTESGPGTRLRNLPVMGDGLETSQMSTTQAQAQPQPANAASTNPPPPETSNPNKPKRQTNQLQYLLRVVLKTLWKHQFAWPFQQPVDAVKLNLPDYYKIIKTPMDMGTIKKRLENNYYWNAQECIQDFNTMFTNCYIYNKPGDDIVLMAEALEKLFLQKINELPTEETEIMIVQAKGRGRGRKETGAAKPGVSTVPNTTQASTSPQTQTPQQNPPPPVQATTHPFPAVTPDLIAQPPVMTMVPPQPLQTPSPVPPQPPPPPAPVPQPVQSHPPIIATTPQPVKTKKGVKRKADTTTPTTIDPIHEPPSLAPEPKTAKLGPRRESSRPVKPPKKDVPDSQQHPGPEKSSKISEQLKCCSGILKEMFAKKHAAYAWPFYKPVDVEALGLHDYCDIIKHPMDMSTIKSKLESREYRDAQEFGADVRLMFSNCYKYNPPDHEVVAMARKLQDVFEMRFAKMPDEPEEPVVTVSSPAVPPPTKVVAPPSSSDSSSDSSSDSDSSTDDSEEERAQRLAELQEQLKAVHEQLAALSQPQQNKPKKKEKDKKEKKKEKHKKKEEVEENKKSKTKELPPKKTKKNNSSNSNVSKKEPVPTKTKPPPTYESEEEDKCKPMSYEEKRQLSLDINKLPGEKLGRVVHIIQSREPSLKNSNPDEIEIDFETLKPSTLRELERYVTSCLRKKRKPQAEKVDVIAGSSKMKGFSSSESESTSESSSSDSEDSETEMAPKSKKKGHTGRDQKKHHHHHHPQMQPAPAPVPQQPPPPPQQPPPPPPPQQQQQQPPPPPPPPSMPQQTAPAMKSSPPPFITAQVPVLEPQLPGSVFDPIGHFTQPILHLPQPELPPHLPQPPEHSTPPHLNQHAVVSPPALHNALPQQPSRPSNRAAALPPKPTRPPAVSPALAQPPLLPQPPMAQPPQVLLEDEEPPAPPLTSMQMQLYLQQLQKVQPPTPLLPSVKVQSQPPPPLPPPPHPSVQQQQLQPQPPPPPPPQPQPPPQQQHQPPPRPVHLPSMPFSAHIQQPPPPPGQQPTHPPPGQQPPPPQPAKPQQVIQHHPSPRHHKSDPYSAGHLREAPSPLMIHSPQMPQFQSLTHQSPPQQNVQPKKQVKGRAEPQPPGPVMGQGQGCPPASPAAVPMLSQELRPPSVVQPQPLVVVKEEKIHSPIIRSEPFSTSLRPEPPKHPENIKAPVHLPQRPEMKPVDIGRPVIRPPEQSAPPPGAPDKDKQKQEPKTPVAPKKDLKIKNMGSWASLVQKHPTTPSSTAKSSSDSFEHFRRAAREKEEREKALKAQAEHAEKEKERLRQERMRSREDEDALEQARRAHEEARRRQEQQQQQQQQRQEQQQQQQQAAAVAAASAPQAQSSQPQSMLDQQRELARKREQERRRREAMAATIDMNFQSDLLSIFEENLF</sequence>
<accession>Q9ESU6</accession>
<accession>B0V2V7</accession>
<accession>Q8VHF7</accession>
<accession>Q8VHF8</accession>
<keyword id="KW-0002">3D-structure</keyword>
<keyword id="KW-0007">Acetylation</keyword>
<keyword id="KW-0025">Alternative splicing</keyword>
<keyword id="KW-0103">Bromodomain</keyword>
<keyword id="KW-0156">Chromatin regulator</keyword>
<keyword id="KW-0158">Chromosome</keyword>
<keyword id="KW-1017">Isopeptide bond</keyword>
<keyword id="KW-0539">Nucleus</keyword>
<keyword id="KW-0597">Phosphoprotein</keyword>
<keyword id="KW-1185">Reference proteome</keyword>
<keyword id="KW-0677">Repeat</keyword>
<keyword id="KW-0804">Transcription</keyword>
<keyword id="KW-0805">Transcription regulation</keyword>
<keyword id="KW-0832">Ubl conjugation</keyword>
<reference key="1">
    <citation type="journal article" date="2000" name="Mol. Cell. Biol.">
        <title>A bromodomain protein, MCAP, associates with mitotic chromosomes and affects G(2)-to-M transition.</title>
        <authorList>
            <person name="Dey A."/>
            <person name="Ellenberg J."/>
            <person name="Farina A."/>
            <person name="Coleman A.E."/>
            <person name="Maruyama T."/>
            <person name="Sciortino S."/>
            <person name="Lippincott-Schwartz J."/>
            <person name="Ozato K."/>
        </authorList>
    </citation>
    <scope>NUCLEOTIDE SEQUENCE [MRNA] (ISOFORM 1)</scope>
    <scope>SUBCELLULAR LOCATION</scope>
    <scope>FUNCTION</scope>
</reference>
<reference key="2">
    <citation type="journal article" date="2002" name="Mol. Cell. Biol.">
        <title>Growth and early postimplantation defects in mice deficient for the bromodomain-containing protein Brd4.</title>
        <authorList>
            <person name="Houzelstein D."/>
            <person name="Bullock S.L."/>
            <person name="Lynch D.E."/>
            <person name="Grigorieva E.F."/>
            <person name="Wilson V.A."/>
            <person name="Beddington R.S.P."/>
        </authorList>
    </citation>
    <scope>NUCLEOTIDE SEQUENCE [MRNA] (ISOFORMS 1 AND 2)</scope>
    <scope>DISRUPTION PHENOTYPE</scope>
</reference>
<reference key="3">
    <citation type="journal article" date="2009" name="PLoS Biol.">
        <title>Lineage-specific biology revealed by a finished genome assembly of the mouse.</title>
        <authorList>
            <person name="Church D.M."/>
            <person name="Goodstadt L."/>
            <person name="Hillier L.W."/>
            <person name="Zody M.C."/>
            <person name="Goldstein S."/>
            <person name="She X."/>
            <person name="Bult C.J."/>
            <person name="Agarwala R."/>
            <person name="Cherry J.L."/>
            <person name="DiCuccio M."/>
            <person name="Hlavina W."/>
            <person name="Kapustin Y."/>
            <person name="Meric P."/>
            <person name="Maglott D."/>
            <person name="Birtle Z."/>
            <person name="Marques A.C."/>
            <person name="Graves T."/>
            <person name="Zhou S."/>
            <person name="Teague B."/>
            <person name="Potamousis K."/>
            <person name="Churas C."/>
            <person name="Place M."/>
            <person name="Herschleb J."/>
            <person name="Runnheim R."/>
            <person name="Forrest D."/>
            <person name="Amos-Landgraf J."/>
            <person name="Schwartz D.C."/>
            <person name="Cheng Z."/>
            <person name="Lindblad-Toh K."/>
            <person name="Eichler E.E."/>
            <person name="Ponting C.P."/>
        </authorList>
    </citation>
    <scope>NUCLEOTIDE SEQUENCE [LARGE SCALE GENOMIC DNA]</scope>
    <source>
        <strain>C57BL/6J</strain>
    </source>
</reference>
<reference key="4">
    <citation type="submission" date="2005-07" db="EMBL/GenBank/DDBJ databases">
        <authorList>
            <person name="Mural R.J."/>
            <person name="Adams M.D."/>
            <person name="Myers E.W."/>
            <person name="Smith H.O."/>
            <person name="Venter J.C."/>
        </authorList>
    </citation>
    <scope>NUCLEOTIDE SEQUENCE [LARGE SCALE GENOMIC DNA]</scope>
</reference>
<reference key="5">
    <citation type="journal article" date="2003" name="Proc. Natl. Acad. Sci. U.S.A.">
        <title>The double bromodomain protein Brd4 binds to acetylated chromatin during interphase and mitosis.</title>
        <authorList>
            <person name="Dey A."/>
            <person name="Chitsaz F."/>
            <person name="Abbasi A."/>
            <person name="Misteli T."/>
            <person name="Ozato K."/>
        </authorList>
    </citation>
    <scope>SUBCELLULAR LOCATION</scope>
    <scope>MUTAGENESIS OF TYR-139; ILE-146; TYR-433 AND VAL-440</scope>
</reference>
<reference key="6">
    <citation type="journal article" date="2005" name="Mol. Cell">
        <title>The bromodomain protein Brd4 is a positive regulatory component of P-TEFb and stimulates RNA polymerase II-dependent transcription.</title>
        <authorList>
            <person name="Jang M.K."/>
            <person name="Mochizuki K."/>
            <person name="Zhou M."/>
            <person name="Jeong H.S."/>
            <person name="Brady J.N."/>
            <person name="Ozato K."/>
        </authorList>
    </citation>
    <scope>FUNCTION</scope>
    <scope>INTERACTION WITH CDK9 AND CCNT1</scope>
</reference>
<reference key="7">
    <citation type="journal article" date="2007" name="Mol. Hum. Reprod.">
        <title>Histone acetylation and subcellular localization of chromosomal protein BRD4 during mouse oocyte meiosis and mitosis.</title>
        <authorList>
            <person name="Nagashima T."/>
            <person name="Maruyama T."/>
            <person name="Furuya M."/>
            <person name="Kajitani T."/>
            <person name="Uchida H."/>
            <person name="Masuda H."/>
            <person name="Ono M."/>
            <person name="Arase T."/>
            <person name="Ozato K."/>
            <person name="Yoshimura Y."/>
        </authorList>
    </citation>
    <scope>SUBCELLULAR LOCATION</scope>
</reference>
<reference key="8">
    <citation type="journal article" date="2011" name="Nature">
        <title>RNAi screen identifies Brd4 as a therapeutic target in acute myeloid leukaemia.</title>
        <authorList>
            <person name="Zuber J."/>
            <person name="Shi J."/>
            <person name="Wang E."/>
            <person name="Rappaport A.R."/>
            <person name="Herrmann H."/>
            <person name="Sison E.A."/>
            <person name="Magoon D."/>
            <person name="Qi J."/>
            <person name="Blatt K."/>
            <person name="Wunderlich M."/>
            <person name="Taylor M.J."/>
            <person name="Johns C."/>
            <person name="Chicas A."/>
            <person name="Mulloy J.C."/>
            <person name="Kogan S.C."/>
            <person name="Brown P."/>
            <person name="Valent P."/>
            <person name="Bradner J.E."/>
            <person name="Lowe S.W."/>
            <person name="Vakoc C.R."/>
        </authorList>
    </citation>
    <scope>POSSIBLE ROLE OF I-BET INHIBITOR IN TUMOR</scope>
</reference>
<reference key="9">
    <citation type="journal article" date="2011" name="Nature">
        <title>Inhibition of BET recruitment to chromatin as an effective treatment for MLL-fusion leukaemia.</title>
        <authorList>
            <person name="Dawson M.A."/>
            <person name="Prinjha R.K."/>
            <person name="Dittmann A."/>
            <person name="Giotopoulos G."/>
            <person name="Bantscheff M."/>
            <person name="Chan W.I."/>
            <person name="Robson S.C."/>
            <person name="Chung C.W."/>
            <person name="Hopf C."/>
            <person name="Savitski M.M."/>
            <person name="Huthmacher C."/>
            <person name="Gudgin E."/>
            <person name="Lugo D."/>
            <person name="Beinke S."/>
            <person name="Chapman T.D."/>
            <person name="Roberts E.J."/>
            <person name="Soden P.E."/>
            <person name="Auger K.R."/>
            <person name="Mirguet O."/>
            <person name="Doehner K."/>
            <person name="Delwel R."/>
            <person name="Burnett A.K."/>
            <person name="Jeffrey P."/>
            <person name="Drewes G."/>
            <person name="Lee K."/>
            <person name="Huntly B.J."/>
            <person name="Kouzarides T."/>
        </authorList>
    </citation>
    <scope>POSSIBLE ROLE OF JQ1 INHIBITOR IN TUMOR</scope>
</reference>
<reference key="10">
    <citation type="journal article" date="2012" name="PLoS ONE">
        <title>Activation of JNK triggers release of Brd4 from mitotic chromosomes and mediates protection from drug-induced mitotic stress.</title>
        <authorList>
            <person name="Nishiyama A."/>
            <person name="Dey A."/>
            <person name="Tamura T."/>
            <person name="Ko M."/>
            <person name="Ozato K."/>
        </authorList>
    </citation>
    <scope>SUBCELLULAR LOCATION</scope>
</reference>
<reference key="11">
    <citation type="journal article" date="2013" name="Mol. Cell">
        <title>SIRT5-mediated lysine desuccinylation impacts diverse metabolic pathways.</title>
        <authorList>
            <person name="Park J."/>
            <person name="Chen Y."/>
            <person name="Tishkoff D.X."/>
            <person name="Peng C."/>
            <person name="Tan M."/>
            <person name="Dai L."/>
            <person name="Xie Z."/>
            <person name="Zhang Y."/>
            <person name="Zwaans B.M."/>
            <person name="Skinner M.E."/>
            <person name="Lombard D.B."/>
            <person name="Zhao Y."/>
        </authorList>
    </citation>
    <scope>IDENTIFICATION BY MASS SPECTROMETRY [LARGE SCALE ANALYSIS]</scope>
    <source>
        <tissue>Embryonic fibroblast</tissue>
    </source>
</reference>
<reference key="12">
    <citation type="journal article" date="2017" name="Mol. Cell">
        <title>Distinct roles of Brd2 and Brd4 in potentiating the transcriptional program for th17 cell differentiation.</title>
        <authorList>
            <person name="Cheung K.L."/>
            <person name="Zhang F."/>
            <person name="Jaganathan A."/>
            <person name="Sharma R."/>
            <person name="Zhang Q."/>
            <person name="Konuma T."/>
            <person name="Shen T."/>
            <person name="Lee J.Y."/>
            <person name="Ren C."/>
            <person name="Chen C.H."/>
            <person name="Lu G."/>
            <person name="Olson M.R."/>
            <person name="Zhang W."/>
            <person name="Kaplan M.H."/>
            <person name="Littman D.R."/>
            <person name="Walsh M.J."/>
            <person name="Xiong H."/>
            <person name="Zeng L."/>
            <person name="Zhou M.M."/>
        </authorList>
    </citation>
    <scope>FUNCTION</scope>
</reference>
<reference key="13">
    <citation type="journal article" date="2018" name="Nat. Genet.">
        <title>BRD4 interacts with NIPBL and BRD4 is mutated in a Cornelia de Lange-like syndrome.</title>
        <authorList>
            <consortium name="Deciphering Developmental Disorders Study"/>
            <person name="Olley G."/>
            <person name="Ansari M."/>
            <person name="Bengani H."/>
            <person name="Grimes G.R."/>
            <person name="Rhodes J."/>
            <person name="von Kriegsheim A."/>
            <person name="Blatnik A."/>
            <person name="Stewart F.J."/>
            <person name="Wakeling E."/>
            <person name="Carroll N."/>
            <person name="Ross A."/>
            <person name="Park S.M."/>
            <person name="Bickmore W.A."/>
            <person name="Pradeepa M.M."/>
            <person name="FitzPatrick D.R."/>
        </authorList>
    </citation>
    <scope>FUNCTION</scope>
    <scope>INTERACTION WITH NIPBL</scope>
    <scope>MUTAGENESIS OF TYR-431</scope>
</reference>
<reference key="14">
    <citation type="journal article" date="2018" name="Nat. Genet.">
        <authorList>
            <consortium name="Deciphering Developmental Disorders Study"/>
            <person name="Olley G."/>
            <person name="Ansari M."/>
            <person name="Bengani H."/>
            <person name="Grimes G.R."/>
            <person name="Rhodes J."/>
            <person name="von Kriegsheim A."/>
            <person name="Blatnik A."/>
            <person name="Stewart F.J."/>
            <person name="Wakeling E."/>
            <person name="Carroll N."/>
            <person name="Ross A."/>
            <person name="Park S.M."/>
            <person name="Bickmore W.A."/>
            <person name="Pradeepa M.M."/>
            <person name="FitzPatrick D.R."/>
        </authorList>
    </citation>
    <scope>ERRATUM OF PUBMED:29379197</scope>
</reference>
<reference key="15">
    <citation type="journal article" date="2019" name="Nat. Genet.">
        <authorList>
            <consortium name="Deciphering Developmental Disorders Study"/>
            <person name="Olley G."/>
            <person name="Ansari M."/>
            <person name="Bengani H."/>
            <person name="Grimes G.R."/>
            <person name="Rhodes J."/>
            <person name="von Kriegsheim A."/>
            <person name="Blatnik A."/>
            <person name="Stewart F.J."/>
            <person name="Wakeling E."/>
            <person name="Carroll N."/>
            <person name="Ross A."/>
            <person name="Park S.M."/>
            <person name="Bickmore W.A."/>
            <person name="Pradeepa M.M."/>
            <person name="FitzPatrick D.R."/>
        </authorList>
    </citation>
    <scope>ERRATUM OF PUBMED:29379197</scope>
</reference>
<reference key="16">
    <citation type="submission" date="2007-08" db="PDB data bank">
        <title>Crystal structure of bromodomain-containing protein 4.</title>
        <authorList>
            <consortium name="RIKEN structural genomics initiative (RSGI)"/>
        </authorList>
    </citation>
    <scope>X-RAY CRYSTALLOGRAPHY (1.8 ANGSTROMS) OF 347-460</scope>
    <scope>STRUCTURE BY NMR OF 601-683</scope>
</reference>
<reference key="17">
    <citation type="journal article" date="2009" name="J. Biol. Chem.">
        <title>Structures of the dual bromodomains of the P-TEFb-activating protein Brd4 at atomic resolution.</title>
        <authorList>
            <person name="Vollmuth F."/>
            <person name="Blankenfeldt W."/>
            <person name="Geyer M."/>
        </authorList>
    </citation>
    <scope>X-RAY CRYSTALLOGRAPHY (1.55 ANGSTROMS) OF 42-168 IN COMPLEX WITH ACETYLATED HISTONE</scope>
    <scope>X-RAY CRYSTALLOGRAPHY (1.2 ANGSTROMS) OF 349-464</scope>
</reference>
<reference key="18">
    <citation type="journal article" date="2010" name="Angew. Chem. Int. Ed.">
        <title>Interaction of propionylated and butyrylated histone H3 lysine marks with Brd4 bromodomains.</title>
        <authorList>
            <person name="Vollmuth F."/>
            <person name="Geyer M."/>
        </authorList>
    </citation>
    <scope>X-RAY CRYSTALLOGRAPHY (1.65 ANGSTROMS) OF 42-168</scope>
</reference>
<name>BRD4_MOUSE</name>
<gene>
    <name type="primary">Brd4</name>
    <name type="synonym">Mcap</name>
</gene>